<feature type="chain" id="PRO_0000068114" description="Glucose-6-phosphate 1-dehydrogenase">
    <location>
        <begin position="1"/>
        <end position="490"/>
    </location>
</feature>
<feature type="active site" description="Proton acceptor" evidence="1">
    <location>
        <position position="237"/>
    </location>
</feature>
<feature type="binding site" evidence="1">
    <location>
        <position position="48"/>
    </location>
    <ligand>
        <name>NADP(+)</name>
        <dbReference type="ChEBI" id="CHEBI:58349"/>
    </ligand>
</feature>
<feature type="binding site" evidence="1">
    <location>
        <begin position="90"/>
        <end position="91"/>
    </location>
    <ligand>
        <name>NADP(+)</name>
        <dbReference type="ChEBI" id="CHEBI:58349"/>
    </ligand>
</feature>
<feature type="binding site" evidence="1">
    <location>
        <position position="145"/>
    </location>
    <ligand>
        <name>NADP(+)</name>
        <dbReference type="ChEBI" id="CHEBI:58349"/>
    </ligand>
</feature>
<feature type="binding site" evidence="1">
    <location>
        <position position="175"/>
    </location>
    <ligand>
        <name>substrate</name>
    </ligand>
</feature>
<feature type="binding site" evidence="1">
    <location>
        <position position="179"/>
    </location>
    <ligand>
        <name>substrate</name>
    </ligand>
</feature>
<feature type="binding site" evidence="1">
    <location>
        <position position="213"/>
    </location>
    <ligand>
        <name>substrate</name>
    </ligand>
</feature>
<feature type="binding site" evidence="1">
    <location>
        <position position="232"/>
    </location>
    <ligand>
        <name>substrate</name>
    </ligand>
</feature>
<feature type="binding site" evidence="1">
    <location>
        <position position="340"/>
    </location>
    <ligand>
        <name>substrate</name>
    </ligand>
</feature>
<feature type="binding site" evidence="1">
    <location>
        <position position="345"/>
    </location>
    <ligand>
        <name>substrate</name>
    </ligand>
</feature>
<dbReference type="EC" id="1.1.1.49" evidence="1"/>
<dbReference type="EMBL" id="AE016826">
    <property type="protein sequence ID" value="AAO27023.1"/>
    <property type="molecule type" value="Genomic_DNA"/>
</dbReference>
<dbReference type="RefSeq" id="WP_011091424.1">
    <property type="nucleotide sequence ID" value="NC_004545.1"/>
</dbReference>
<dbReference type="SMR" id="Q89AI7"/>
<dbReference type="STRING" id="224915.bbp_298"/>
<dbReference type="KEGG" id="bab:bbp_298"/>
<dbReference type="eggNOG" id="COG0364">
    <property type="taxonomic scope" value="Bacteria"/>
</dbReference>
<dbReference type="HOGENOM" id="CLU_013524_5_0_6"/>
<dbReference type="OrthoDB" id="9802739at2"/>
<dbReference type="UniPathway" id="UPA00115">
    <property type="reaction ID" value="UER00408"/>
</dbReference>
<dbReference type="Proteomes" id="UP000000601">
    <property type="component" value="Chromosome"/>
</dbReference>
<dbReference type="GO" id="GO:0005829">
    <property type="term" value="C:cytosol"/>
    <property type="evidence" value="ECO:0007669"/>
    <property type="project" value="TreeGrafter"/>
</dbReference>
<dbReference type="GO" id="GO:0004345">
    <property type="term" value="F:glucose-6-phosphate dehydrogenase activity"/>
    <property type="evidence" value="ECO:0007669"/>
    <property type="project" value="UniProtKB-UniRule"/>
</dbReference>
<dbReference type="GO" id="GO:0050661">
    <property type="term" value="F:NADP binding"/>
    <property type="evidence" value="ECO:0007669"/>
    <property type="project" value="UniProtKB-UniRule"/>
</dbReference>
<dbReference type="GO" id="GO:0006006">
    <property type="term" value="P:glucose metabolic process"/>
    <property type="evidence" value="ECO:0007669"/>
    <property type="project" value="UniProtKB-KW"/>
</dbReference>
<dbReference type="GO" id="GO:0009051">
    <property type="term" value="P:pentose-phosphate shunt, oxidative branch"/>
    <property type="evidence" value="ECO:0007669"/>
    <property type="project" value="TreeGrafter"/>
</dbReference>
<dbReference type="FunFam" id="3.40.50.720:FF:000079">
    <property type="entry name" value="Glucose-6-phosphate 1-dehydrogenase"/>
    <property type="match status" value="1"/>
</dbReference>
<dbReference type="Gene3D" id="3.30.360.10">
    <property type="entry name" value="Dihydrodipicolinate Reductase, domain 2"/>
    <property type="match status" value="1"/>
</dbReference>
<dbReference type="Gene3D" id="3.40.50.720">
    <property type="entry name" value="NAD(P)-binding Rossmann-like Domain"/>
    <property type="match status" value="1"/>
</dbReference>
<dbReference type="HAMAP" id="MF_00966">
    <property type="entry name" value="G6PD"/>
    <property type="match status" value="1"/>
</dbReference>
<dbReference type="InterPro" id="IPR001282">
    <property type="entry name" value="G6P_DH"/>
</dbReference>
<dbReference type="InterPro" id="IPR019796">
    <property type="entry name" value="G6P_DH_AS"/>
</dbReference>
<dbReference type="InterPro" id="IPR022675">
    <property type="entry name" value="G6P_DH_C"/>
</dbReference>
<dbReference type="InterPro" id="IPR022674">
    <property type="entry name" value="G6P_DH_NAD-bd"/>
</dbReference>
<dbReference type="InterPro" id="IPR036291">
    <property type="entry name" value="NAD(P)-bd_dom_sf"/>
</dbReference>
<dbReference type="NCBIfam" id="TIGR00871">
    <property type="entry name" value="zwf"/>
    <property type="match status" value="1"/>
</dbReference>
<dbReference type="PANTHER" id="PTHR23429:SF0">
    <property type="entry name" value="GLUCOSE-6-PHOSPHATE 1-DEHYDROGENASE"/>
    <property type="match status" value="1"/>
</dbReference>
<dbReference type="PANTHER" id="PTHR23429">
    <property type="entry name" value="GLUCOSE-6-PHOSPHATE 1-DEHYDROGENASE G6PD"/>
    <property type="match status" value="1"/>
</dbReference>
<dbReference type="Pfam" id="PF02781">
    <property type="entry name" value="G6PD_C"/>
    <property type="match status" value="1"/>
</dbReference>
<dbReference type="Pfam" id="PF00479">
    <property type="entry name" value="G6PD_N"/>
    <property type="match status" value="1"/>
</dbReference>
<dbReference type="PIRSF" id="PIRSF000110">
    <property type="entry name" value="G6PD"/>
    <property type="match status" value="1"/>
</dbReference>
<dbReference type="PRINTS" id="PR00079">
    <property type="entry name" value="G6PDHDRGNASE"/>
</dbReference>
<dbReference type="SUPFAM" id="SSF55347">
    <property type="entry name" value="Glyceraldehyde-3-phosphate dehydrogenase-like, C-terminal domain"/>
    <property type="match status" value="1"/>
</dbReference>
<dbReference type="SUPFAM" id="SSF51735">
    <property type="entry name" value="NAD(P)-binding Rossmann-fold domains"/>
    <property type="match status" value="1"/>
</dbReference>
<dbReference type="PROSITE" id="PS00069">
    <property type="entry name" value="G6P_DEHYDROGENASE"/>
    <property type="match status" value="1"/>
</dbReference>
<gene>
    <name evidence="1" type="primary">zwf</name>
    <name type="ordered locus">bbp_298</name>
</gene>
<keyword id="KW-0119">Carbohydrate metabolism</keyword>
<keyword id="KW-0313">Glucose metabolism</keyword>
<keyword id="KW-0521">NADP</keyword>
<keyword id="KW-0560">Oxidoreductase</keyword>
<keyword id="KW-1185">Reference proteome</keyword>
<name>G6PD_BUCBP</name>
<proteinExistence type="inferred from homology"/>
<organism>
    <name type="scientific">Buchnera aphidicola subsp. Baizongia pistaciae (strain Bp)</name>
    <dbReference type="NCBI Taxonomy" id="224915"/>
    <lineage>
        <taxon>Bacteria</taxon>
        <taxon>Pseudomonadati</taxon>
        <taxon>Pseudomonadota</taxon>
        <taxon>Gammaproteobacteria</taxon>
        <taxon>Enterobacterales</taxon>
        <taxon>Erwiniaceae</taxon>
        <taxon>Buchnera</taxon>
    </lineage>
</organism>
<accession>Q89AI7</accession>
<protein>
    <recommendedName>
        <fullName evidence="1">Glucose-6-phosphate 1-dehydrogenase</fullName>
        <shortName evidence="1">G6PD</shortName>
        <ecNumber evidence="1">1.1.1.49</ecNumber>
    </recommendedName>
</protein>
<evidence type="ECO:0000255" key="1">
    <source>
        <dbReference type="HAMAP-Rule" id="MF_00966"/>
    </source>
</evidence>
<comment type="function">
    <text evidence="1">Catalyzes the oxidation of glucose 6-phosphate to 6-phosphogluconolactone.</text>
</comment>
<comment type="catalytic activity">
    <reaction evidence="1">
        <text>D-glucose 6-phosphate + NADP(+) = 6-phospho-D-glucono-1,5-lactone + NADPH + H(+)</text>
        <dbReference type="Rhea" id="RHEA:15841"/>
        <dbReference type="ChEBI" id="CHEBI:15378"/>
        <dbReference type="ChEBI" id="CHEBI:57783"/>
        <dbReference type="ChEBI" id="CHEBI:57955"/>
        <dbReference type="ChEBI" id="CHEBI:58349"/>
        <dbReference type="ChEBI" id="CHEBI:61548"/>
        <dbReference type="EC" id="1.1.1.49"/>
    </reaction>
</comment>
<comment type="pathway">
    <text evidence="1">Carbohydrate degradation; pentose phosphate pathway; D-ribulose 5-phosphate from D-glucose 6-phosphate (oxidative stage): step 1/3.</text>
</comment>
<comment type="similarity">
    <text evidence="1">Belongs to the glucose-6-phosphate dehydrogenase family.</text>
</comment>
<sequence>MKNKNSGYDLVIFGAKGDLSCRKLLPSLYQLEKKNKLCTHTRIIGVGRANWDKIIYTNVVYKSLIKFLNETIIESIWKKFSSRLEFCNLDINCLHNFKKLKQIIQQNNNIIINYLAMPPHTFGNICLGLESINLNLEPTRIIIEKPLGSSLKTSININNKIGKFFKEKQIFRIDHYLGKETIQNLLAFRFSNSLFYYNWNNKFIDHVQITVSETIGVEGRFNYFDTVGQIKDMVQNHLLQILTITTMSTPIDCHENSIRDEKVKILKSLRPFNINNIHKNVILGQYTSGIINQKKVKSYLDETNNQEYQMNKYTETFVSMKIYIDNDQWSGVPFYLRTGKRLPKKCSEIVIFFKTPPLNIFSKNYNTLSKNKLILSLQPNEAIKIYILNKKPKLTSQYKLDLITLDFNYSKFYKKIQLSDAYEKLLLESMKGIQSLFVRRDEVELAWKWIDSTLQCLHLKPRLPDLYPAGTWGPARSKTMINNDGYEWNE</sequence>
<reference key="1">
    <citation type="journal article" date="2003" name="Proc. Natl. Acad. Sci. U.S.A.">
        <title>Reductive genome evolution in Buchnera aphidicola.</title>
        <authorList>
            <person name="van Ham R.C.H.J."/>
            <person name="Kamerbeek J."/>
            <person name="Palacios C."/>
            <person name="Rausell C."/>
            <person name="Abascal F."/>
            <person name="Bastolla U."/>
            <person name="Fernandez J.M."/>
            <person name="Jimenez L."/>
            <person name="Postigo M."/>
            <person name="Silva F.J."/>
            <person name="Tamames J."/>
            <person name="Viguera E."/>
            <person name="Latorre A."/>
            <person name="Valencia A."/>
            <person name="Moran F."/>
            <person name="Moya A."/>
        </authorList>
    </citation>
    <scope>NUCLEOTIDE SEQUENCE [LARGE SCALE GENOMIC DNA]</scope>
    <source>
        <strain>Bp</strain>
    </source>
</reference>